<dbReference type="EC" id="3.5.4.19" evidence="1"/>
<dbReference type="EMBL" id="CP000094">
    <property type="protein sequence ID" value="ABA72128.1"/>
    <property type="molecule type" value="Genomic_DNA"/>
</dbReference>
<dbReference type="RefSeq" id="WP_007909357.1">
    <property type="nucleotide sequence ID" value="NC_007492.2"/>
</dbReference>
<dbReference type="SMR" id="Q3KJC8"/>
<dbReference type="GeneID" id="93487103"/>
<dbReference type="KEGG" id="pfo:Pfl01_0384"/>
<dbReference type="eggNOG" id="COG0139">
    <property type="taxonomic scope" value="Bacteria"/>
</dbReference>
<dbReference type="HOGENOM" id="CLU_048577_5_0_6"/>
<dbReference type="UniPathway" id="UPA00031">
    <property type="reaction ID" value="UER00008"/>
</dbReference>
<dbReference type="Proteomes" id="UP000002704">
    <property type="component" value="Chromosome"/>
</dbReference>
<dbReference type="GO" id="GO:0005737">
    <property type="term" value="C:cytoplasm"/>
    <property type="evidence" value="ECO:0007669"/>
    <property type="project" value="UniProtKB-SubCell"/>
</dbReference>
<dbReference type="GO" id="GO:0000287">
    <property type="term" value="F:magnesium ion binding"/>
    <property type="evidence" value="ECO:0007669"/>
    <property type="project" value="UniProtKB-UniRule"/>
</dbReference>
<dbReference type="GO" id="GO:0004635">
    <property type="term" value="F:phosphoribosyl-AMP cyclohydrolase activity"/>
    <property type="evidence" value="ECO:0007669"/>
    <property type="project" value="UniProtKB-UniRule"/>
</dbReference>
<dbReference type="GO" id="GO:0008270">
    <property type="term" value="F:zinc ion binding"/>
    <property type="evidence" value="ECO:0007669"/>
    <property type="project" value="UniProtKB-UniRule"/>
</dbReference>
<dbReference type="GO" id="GO:0000105">
    <property type="term" value="P:L-histidine biosynthetic process"/>
    <property type="evidence" value="ECO:0007669"/>
    <property type="project" value="UniProtKB-UniRule"/>
</dbReference>
<dbReference type="FunFam" id="3.10.20.810:FF:000001">
    <property type="entry name" value="Histidine biosynthesis bifunctional protein HisIE"/>
    <property type="match status" value="1"/>
</dbReference>
<dbReference type="Gene3D" id="3.10.20.810">
    <property type="entry name" value="Phosphoribosyl-AMP cyclohydrolase"/>
    <property type="match status" value="1"/>
</dbReference>
<dbReference type="HAMAP" id="MF_01021">
    <property type="entry name" value="HisI"/>
    <property type="match status" value="1"/>
</dbReference>
<dbReference type="InterPro" id="IPR026660">
    <property type="entry name" value="PRA-CH"/>
</dbReference>
<dbReference type="InterPro" id="IPR002496">
    <property type="entry name" value="PRib_AMP_CycHydrolase_dom"/>
</dbReference>
<dbReference type="InterPro" id="IPR038019">
    <property type="entry name" value="PRib_AMP_CycHydrolase_sf"/>
</dbReference>
<dbReference type="NCBIfam" id="NF000768">
    <property type="entry name" value="PRK00051.1"/>
    <property type="match status" value="1"/>
</dbReference>
<dbReference type="PANTHER" id="PTHR42945">
    <property type="entry name" value="HISTIDINE BIOSYNTHESIS BIFUNCTIONAL PROTEIN"/>
    <property type="match status" value="1"/>
</dbReference>
<dbReference type="PANTHER" id="PTHR42945:SF1">
    <property type="entry name" value="HISTIDINE BIOSYNTHESIS BIFUNCTIONAL PROTEIN HIS7"/>
    <property type="match status" value="1"/>
</dbReference>
<dbReference type="Pfam" id="PF01502">
    <property type="entry name" value="PRA-CH"/>
    <property type="match status" value="1"/>
</dbReference>
<dbReference type="SUPFAM" id="SSF141734">
    <property type="entry name" value="HisI-like"/>
    <property type="match status" value="1"/>
</dbReference>
<sequence length="133" mass="15361">MKNWLDEIKWDADGLVPAIAQDHKTGRVLMMAWMNREALELTAAENRAIYWSRSRGKLWRKGEESGHVQTLHEMRLDCDADVIILMVEQIGDIACHTGRQSCFYRVFENGDWKTVDPVLKDPHAIYSAGHKHE</sequence>
<reference key="1">
    <citation type="journal article" date="2009" name="Genome Biol.">
        <title>Genomic and genetic analyses of diversity and plant interactions of Pseudomonas fluorescens.</title>
        <authorList>
            <person name="Silby M.W."/>
            <person name="Cerdeno-Tarraga A.M."/>
            <person name="Vernikos G.S."/>
            <person name="Giddens S.R."/>
            <person name="Jackson R.W."/>
            <person name="Preston G.M."/>
            <person name="Zhang X.-X."/>
            <person name="Moon C.D."/>
            <person name="Gehrig S.M."/>
            <person name="Godfrey S.A.C."/>
            <person name="Knight C.G."/>
            <person name="Malone J.G."/>
            <person name="Robinson Z."/>
            <person name="Spiers A.J."/>
            <person name="Harris S."/>
            <person name="Challis G.L."/>
            <person name="Yaxley A.M."/>
            <person name="Harris D."/>
            <person name="Seeger K."/>
            <person name="Murphy L."/>
            <person name="Rutter S."/>
            <person name="Squares R."/>
            <person name="Quail M.A."/>
            <person name="Saunders E."/>
            <person name="Mavromatis K."/>
            <person name="Brettin T.S."/>
            <person name="Bentley S.D."/>
            <person name="Hothersall J."/>
            <person name="Stephens E."/>
            <person name="Thomas C.M."/>
            <person name="Parkhill J."/>
            <person name="Levy S.B."/>
            <person name="Rainey P.B."/>
            <person name="Thomson N.R."/>
        </authorList>
    </citation>
    <scope>NUCLEOTIDE SEQUENCE [LARGE SCALE GENOMIC DNA]</scope>
    <source>
        <strain>Pf0-1</strain>
    </source>
</reference>
<name>HIS3_PSEPF</name>
<protein>
    <recommendedName>
        <fullName evidence="1">Phosphoribosyl-AMP cyclohydrolase</fullName>
        <shortName evidence="1">PRA-CH</shortName>
        <ecNumber evidence="1">3.5.4.19</ecNumber>
    </recommendedName>
</protein>
<proteinExistence type="inferred from homology"/>
<feature type="chain" id="PRO_0000229836" description="Phosphoribosyl-AMP cyclohydrolase">
    <location>
        <begin position="1"/>
        <end position="133"/>
    </location>
</feature>
<feature type="binding site" evidence="1">
    <location>
        <position position="77"/>
    </location>
    <ligand>
        <name>Mg(2+)</name>
        <dbReference type="ChEBI" id="CHEBI:18420"/>
    </ligand>
</feature>
<feature type="binding site" evidence="1">
    <location>
        <position position="78"/>
    </location>
    <ligand>
        <name>Zn(2+)</name>
        <dbReference type="ChEBI" id="CHEBI:29105"/>
        <note>ligand shared between dimeric partners</note>
    </ligand>
</feature>
<feature type="binding site" evidence="1">
    <location>
        <position position="79"/>
    </location>
    <ligand>
        <name>Mg(2+)</name>
        <dbReference type="ChEBI" id="CHEBI:18420"/>
    </ligand>
</feature>
<feature type="binding site" evidence="1">
    <location>
        <position position="81"/>
    </location>
    <ligand>
        <name>Mg(2+)</name>
        <dbReference type="ChEBI" id="CHEBI:18420"/>
    </ligand>
</feature>
<feature type="binding site" evidence="1">
    <location>
        <position position="95"/>
    </location>
    <ligand>
        <name>Zn(2+)</name>
        <dbReference type="ChEBI" id="CHEBI:29105"/>
        <note>ligand shared between dimeric partners</note>
    </ligand>
</feature>
<feature type="binding site" evidence="1">
    <location>
        <position position="102"/>
    </location>
    <ligand>
        <name>Zn(2+)</name>
        <dbReference type="ChEBI" id="CHEBI:29105"/>
        <note>ligand shared between dimeric partners</note>
    </ligand>
</feature>
<organism>
    <name type="scientific">Pseudomonas fluorescens (strain Pf0-1)</name>
    <dbReference type="NCBI Taxonomy" id="205922"/>
    <lineage>
        <taxon>Bacteria</taxon>
        <taxon>Pseudomonadati</taxon>
        <taxon>Pseudomonadota</taxon>
        <taxon>Gammaproteobacteria</taxon>
        <taxon>Pseudomonadales</taxon>
        <taxon>Pseudomonadaceae</taxon>
        <taxon>Pseudomonas</taxon>
    </lineage>
</organism>
<keyword id="KW-0028">Amino-acid biosynthesis</keyword>
<keyword id="KW-0963">Cytoplasm</keyword>
<keyword id="KW-0368">Histidine biosynthesis</keyword>
<keyword id="KW-0378">Hydrolase</keyword>
<keyword id="KW-0460">Magnesium</keyword>
<keyword id="KW-0479">Metal-binding</keyword>
<keyword id="KW-0862">Zinc</keyword>
<comment type="function">
    <text evidence="1">Catalyzes the hydrolysis of the adenine ring of phosphoribosyl-AMP.</text>
</comment>
<comment type="catalytic activity">
    <reaction evidence="1">
        <text>1-(5-phospho-beta-D-ribosyl)-5'-AMP + H2O = 1-(5-phospho-beta-D-ribosyl)-5-[(5-phospho-beta-D-ribosylamino)methylideneamino]imidazole-4-carboxamide</text>
        <dbReference type="Rhea" id="RHEA:20049"/>
        <dbReference type="ChEBI" id="CHEBI:15377"/>
        <dbReference type="ChEBI" id="CHEBI:58435"/>
        <dbReference type="ChEBI" id="CHEBI:59457"/>
        <dbReference type="EC" id="3.5.4.19"/>
    </reaction>
</comment>
<comment type="cofactor">
    <cofactor evidence="1">
        <name>Mg(2+)</name>
        <dbReference type="ChEBI" id="CHEBI:18420"/>
    </cofactor>
    <text evidence="1">Binds 1 Mg(2+) ion per subunit.</text>
</comment>
<comment type="cofactor">
    <cofactor evidence="1">
        <name>Zn(2+)</name>
        <dbReference type="ChEBI" id="CHEBI:29105"/>
    </cofactor>
    <text evidence="1">Binds 1 zinc ion per subunit.</text>
</comment>
<comment type="pathway">
    <text evidence="1">Amino-acid biosynthesis; L-histidine biosynthesis; L-histidine from 5-phospho-alpha-D-ribose 1-diphosphate: step 3/9.</text>
</comment>
<comment type="subunit">
    <text evidence="1">Homodimer.</text>
</comment>
<comment type="subcellular location">
    <subcellularLocation>
        <location evidence="1">Cytoplasm</location>
    </subcellularLocation>
</comment>
<comment type="similarity">
    <text evidence="1">Belongs to the PRA-CH family.</text>
</comment>
<evidence type="ECO:0000255" key="1">
    <source>
        <dbReference type="HAMAP-Rule" id="MF_01021"/>
    </source>
</evidence>
<gene>
    <name evidence="1" type="primary">hisI</name>
    <name type="ordered locus">Pfl01_0384</name>
</gene>
<accession>Q3KJC8</accession>